<sequence length="123" mass="13424">MARIGGVNVPVNKRVVVALTYIYGIGPSLASKICEGCGIGEDVLVSSLSDEDVVKIRNFIRSGCVVEADLRKEVAMNIKFLMDIGCYRGLRHRKKLPVRGQRTHTNARTRKGGTRLAVAVKKG</sequence>
<comment type="function">
    <text evidence="1">Located at the top of the head of the 30S subunit, it contacts several helices of the 16S rRNA. In the 70S ribosome it contacts the 23S rRNA (bridge B1a) and protein L5 of the 50S subunit (bridge B1b), connecting the 2 subunits; these bridges are implicated in subunit movement. Contacts the tRNAs in the A and P-sites.</text>
</comment>
<comment type="subunit">
    <text evidence="1">Part of the 30S ribosomal subunit. Forms a loose heterodimer with protein S19. Forms two bridges to the 50S subunit in the 70S ribosome.</text>
</comment>
<comment type="similarity">
    <text evidence="1">Belongs to the universal ribosomal protein uS13 family.</text>
</comment>
<dbReference type="EMBL" id="CP000030">
    <property type="protein sequence ID" value="AAV86801.1"/>
    <property type="molecule type" value="Genomic_DNA"/>
</dbReference>
<dbReference type="RefSeq" id="WP_010265244.1">
    <property type="nucleotide sequence ID" value="NZ_AFMU01000034.1"/>
</dbReference>
<dbReference type="SMR" id="Q5PA79"/>
<dbReference type="GeneID" id="7397857"/>
<dbReference type="KEGG" id="ama:AM890"/>
<dbReference type="PATRIC" id="fig|320483.3.peg.768"/>
<dbReference type="HOGENOM" id="CLU_103849_1_2_5"/>
<dbReference type="GO" id="GO:0005829">
    <property type="term" value="C:cytosol"/>
    <property type="evidence" value="ECO:0007669"/>
    <property type="project" value="TreeGrafter"/>
</dbReference>
<dbReference type="GO" id="GO:0015935">
    <property type="term" value="C:small ribosomal subunit"/>
    <property type="evidence" value="ECO:0007669"/>
    <property type="project" value="TreeGrafter"/>
</dbReference>
<dbReference type="GO" id="GO:0019843">
    <property type="term" value="F:rRNA binding"/>
    <property type="evidence" value="ECO:0007669"/>
    <property type="project" value="UniProtKB-UniRule"/>
</dbReference>
<dbReference type="GO" id="GO:0003735">
    <property type="term" value="F:structural constituent of ribosome"/>
    <property type="evidence" value="ECO:0007669"/>
    <property type="project" value="InterPro"/>
</dbReference>
<dbReference type="GO" id="GO:0000049">
    <property type="term" value="F:tRNA binding"/>
    <property type="evidence" value="ECO:0007669"/>
    <property type="project" value="UniProtKB-UniRule"/>
</dbReference>
<dbReference type="GO" id="GO:0006412">
    <property type="term" value="P:translation"/>
    <property type="evidence" value="ECO:0007669"/>
    <property type="project" value="UniProtKB-UniRule"/>
</dbReference>
<dbReference type="FunFam" id="1.10.8.50:FF:000001">
    <property type="entry name" value="30S ribosomal protein S13"/>
    <property type="match status" value="1"/>
</dbReference>
<dbReference type="FunFam" id="4.10.910.10:FF:000001">
    <property type="entry name" value="30S ribosomal protein S13"/>
    <property type="match status" value="1"/>
</dbReference>
<dbReference type="Gene3D" id="1.10.8.50">
    <property type="match status" value="1"/>
</dbReference>
<dbReference type="Gene3D" id="4.10.910.10">
    <property type="entry name" value="30s ribosomal protein s13, domain 2"/>
    <property type="match status" value="1"/>
</dbReference>
<dbReference type="HAMAP" id="MF_01315">
    <property type="entry name" value="Ribosomal_uS13"/>
    <property type="match status" value="1"/>
</dbReference>
<dbReference type="InterPro" id="IPR027437">
    <property type="entry name" value="Rbsml_uS13_C"/>
</dbReference>
<dbReference type="InterPro" id="IPR001892">
    <property type="entry name" value="Ribosomal_uS13"/>
</dbReference>
<dbReference type="InterPro" id="IPR010979">
    <property type="entry name" value="Ribosomal_uS13-like_H2TH"/>
</dbReference>
<dbReference type="InterPro" id="IPR019980">
    <property type="entry name" value="Ribosomal_uS13_bac-type"/>
</dbReference>
<dbReference type="InterPro" id="IPR018269">
    <property type="entry name" value="Ribosomal_uS13_CS"/>
</dbReference>
<dbReference type="NCBIfam" id="TIGR03631">
    <property type="entry name" value="uS13_bact"/>
    <property type="match status" value="1"/>
</dbReference>
<dbReference type="PANTHER" id="PTHR10871">
    <property type="entry name" value="30S RIBOSOMAL PROTEIN S13/40S RIBOSOMAL PROTEIN S18"/>
    <property type="match status" value="1"/>
</dbReference>
<dbReference type="PANTHER" id="PTHR10871:SF1">
    <property type="entry name" value="SMALL RIBOSOMAL SUBUNIT PROTEIN US13M"/>
    <property type="match status" value="1"/>
</dbReference>
<dbReference type="Pfam" id="PF00416">
    <property type="entry name" value="Ribosomal_S13"/>
    <property type="match status" value="1"/>
</dbReference>
<dbReference type="PIRSF" id="PIRSF002134">
    <property type="entry name" value="Ribosomal_S13"/>
    <property type="match status" value="1"/>
</dbReference>
<dbReference type="SUPFAM" id="SSF46946">
    <property type="entry name" value="S13-like H2TH domain"/>
    <property type="match status" value="1"/>
</dbReference>
<dbReference type="PROSITE" id="PS00646">
    <property type="entry name" value="RIBOSOMAL_S13_1"/>
    <property type="match status" value="1"/>
</dbReference>
<dbReference type="PROSITE" id="PS50159">
    <property type="entry name" value="RIBOSOMAL_S13_2"/>
    <property type="match status" value="1"/>
</dbReference>
<gene>
    <name evidence="1" type="primary">rpsM</name>
    <name type="ordered locus">AM890</name>
</gene>
<name>RS13_ANAMM</name>
<organism>
    <name type="scientific">Anaplasma marginale (strain St. Maries)</name>
    <dbReference type="NCBI Taxonomy" id="234826"/>
    <lineage>
        <taxon>Bacteria</taxon>
        <taxon>Pseudomonadati</taxon>
        <taxon>Pseudomonadota</taxon>
        <taxon>Alphaproteobacteria</taxon>
        <taxon>Rickettsiales</taxon>
        <taxon>Anaplasmataceae</taxon>
        <taxon>Anaplasma</taxon>
    </lineage>
</organism>
<feature type="chain" id="PRO_0000230464" description="Small ribosomal subunit protein uS13">
    <location>
        <begin position="1"/>
        <end position="123"/>
    </location>
</feature>
<accession>Q5PA79</accession>
<evidence type="ECO:0000255" key="1">
    <source>
        <dbReference type="HAMAP-Rule" id="MF_01315"/>
    </source>
</evidence>
<evidence type="ECO:0000305" key="2"/>
<reference key="1">
    <citation type="journal article" date="2005" name="Proc. Natl. Acad. Sci. U.S.A.">
        <title>Complete genome sequencing of Anaplasma marginale reveals that the surface is skewed to two superfamilies of outer membrane proteins.</title>
        <authorList>
            <person name="Brayton K.A."/>
            <person name="Kappmeyer L.S."/>
            <person name="Herndon D.R."/>
            <person name="Dark M.J."/>
            <person name="Tibbals D.L."/>
            <person name="Palmer G.H."/>
            <person name="McGuire T.C."/>
            <person name="Knowles D.P. Jr."/>
        </authorList>
    </citation>
    <scope>NUCLEOTIDE SEQUENCE [LARGE SCALE GENOMIC DNA]</scope>
    <source>
        <strain>St. Maries</strain>
    </source>
</reference>
<proteinExistence type="inferred from homology"/>
<protein>
    <recommendedName>
        <fullName evidence="1">Small ribosomal subunit protein uS13</fullName>
    </recommendedName>
    <alternativeName>
        <fullName evidence="2">30S ribosomal protein S13</fullName>
    </alternativeName>
</protein>
<keyword id="KW-0687">Ribonucleoprotein</keyword>
<keyword id="KW-0689">Ribosomal protein</keyword>
<keyword id="KW-0694">RNA-binding</keyword>
<keyword id="KW-0699">rRNA-binding</keyword>
<keyword id="KW-0820">tRNA-binding</keyword>